<evidence type="ECO:0000250" key="1">
    <source>
        <dbReference type="UniProtKB" id="P03902"/>
    </source>
</evidence>
<evidence type="ECO:0000255" key="2"/>
<evidence type="ECO:0000305" key="3"/>
<reference key="1">
    <citation type="journal article" date="1998" name="Nucleic Acids Res.">
        <title>Complete sequence of the amphioxus (Branchiostoma lanceolatum) mitochondrial genome: relations to vertebrates.</title>
        <authorList>
            <person name="Spruyt N."/>
            <person name="Delarbre C."/>
            <person name="Gachelin G."/>
            <person name="Laudet V."/>
        </authorList>
    </citation>
    <scope>NUCLEOTIDE SEQUENCE [GENOMIC DNA]</scope>
</reference>
<geneLocation type="mitochondrion"/>
<proteinExistence type="inferred from homology"/>
<name>NU4LM_BRALA</name>
<keyword id="KW-0249">Electron transport</keyword>
<keyword id="KW-0472">Membrane</keyword>
<keyword id="KW-0496">Mitochondrion</keyword>
<keyword id="KW-0999">Mitochondrion inner membrane</keyword>
<keyword id="KW-0520">NAD</keyword>
<keyword id="KW-0679">Respiratory chain</keyword>
<keyword id="KW-1278">Translocase</keyword>
<keyword id="KW-0812">Transmembrane</keyword>
<keyword id="KW-1133">Transmembrane helix</keyword>
<keyword id="KW-0813">Transport</keyword>
<keyword id="KW-0830">Ubiquinone</keyword>
<accession>P69239</accession>
<accession>O47424</accession>
<accession>O79420</accession>
<dbReference type="EC" id="7.1.1.2"/>
<dbReference type="EMBL" id="Y16474">
    <property type="protein sequence ID" value="CAA76255.1"/>
    <property type="molecule type" value="Genomic_DNA"/>
</dbReference>
<dbReference type="PIR" id="B71391">
    <property type="entry name" value="B71391"/>
</dbReference>
<dbReference type="RefSeq" id="NP_007545.1">
    <property type="nucleotide sequence ID" value="NC_001912.1"/>
</dbReference>
<dbReference type="SMR" id="P69239"/>
<dbReference type="GeneID" id="808219"/>
<dbReference type="CTD" id="4539"/>
<dbReference type="GO" id="GO:0005743">
    <property type="term" value="C:mitochondrial inner membrane"/>
    <property type="evidence" value="ECO:0000250"/>
    <property type="project" value="UniProtKB"/>
</dbReference>
<dbReference type="GO" id="GO:0008137">
    <property type="term" value="F:NADH dehydrogenase (ubiquinone) activity"/>
    <property type="evidence" value="ECO:0007669"/>
    <property type="project" value="UniProtKB-EC"/>
</dbReference>
<dbReference type="Gene3D" id="1.10.287.3510">
    <property type="match status" value="1"/>
</dbReference>
<dbReference type="InterPro" id="IPR039428">
    <property type="entry name" value="NUOK/Mnh_C1-like"/>
</dbReference>
<dbReference type="Pfam" id="PF00420">
    <property type="entry name" value="Oxidored_q2"/>
    <property type="match status" value="1"/>
</dbReference>
<sequence length="91" mass="9751">MLIMILIFLIALLGLGLSQTHLLSVLLCLEMMMVSLYLGLGMVSISGLHYPLMIALVLLTFSACEASSGLALLVLISRSHGSDLLKSFNLS</sequence>
<gene>
    <name type="primary">ND4L</name>
    <name type="synonym">NAD4L</name>
    <name type="synonym">NADH4L</name>
</gene>
<feature type="chain" id="PRO_0000118398" description="NADH-ubiquinone oxidoreductase chain 4L">
    <location>
        <begin position="1"/>
        <end position="91"/>
    </location>
</feature>
<feature type="transmembrane region" description="Helical" evidence="2">
    <location>
        <begin position="2"/>
        <end position="22"/>
    </location>
</feature>
<feature type="transmembrane region" description="Helical" evidence="2">
    <location>
        <begin position="38"/>
        <end position="58"/>
    </location>
</feature>
<organism>
    <name type="scientific">Branchiostoma lanceolatum</name>
    <name type="common">Common lancelet</name>
    <name type="synonym">Amphioxus lanceolatum</name>
    <dbReference type="NCBI Taxonomy" id="7740"/>
    <lineage>
        <taxon>Eukaryota</taxon>
        <taxon>Metazoa</taxon>
        <taxon>Chordata</taxon>
        <taxon>Cephalochordata</taxon>
        <taxon>Leptocardii</taxon>
        <taxon>Amphioxiformes</taxon>
        <taxon>Branchiostomatidae</taxon>
        <taxon>Branchiostoma</taxon>
    </lineage>
</organism>
<protein>
    <recommendedName>
        <fullName>NADH-ubiquinone oxidoreductase chain 4L</fullName>
        <ecNumber>7.1.1.2</ecNumber>
    </recommendedName>
    <alternativeName>
        <fullName>NADH dehydrogenase subunit 4L</fullName>
    </alternativeName>
</protein>
<comment type="function">
    <text evidence="1">Core subunit of the mitochondrial membrane respiratory chain NADH dehydrogenase (Complex I) which catalyzes electron transfer from NADH through the respiratory chain, using ubiquinone as an electron acceptor.</text>
</comment>
<comment type="catalytic activity">
    <reaction>
        <text>a ubiquinone + NADH + 5 H(+)(in) = a ubiquinol + NAD(+) + 4 H(+)(out)</text>
        <dbReference type="Rhea" id="RHEA:29091"/>
        <dbReference type="Rhea" id="RHEA-COMP:9565"/>
        <dbReference type="Rhea" id="RHEA-COMP:9566"/>
        <dbReference type="ChEBI" id="CHEBI:15378"/>
        <dbReference type="ChEBI" id="CHEBI:16389"/>
        <dbReference type="ChEBI" id="CHEBI:17976"/>
        <dbReference type="ChEBI" id="CHEBI:57540"/>
        <dbReference type="ChEBI" id="CHEBI:57945"/>
        <dbReference type="EC" id="7.1.1.2"/>
    </reaction>
</comment>
<comment type="subunit">
    <text evidence="1">Core subunit of respiratory chain NADH dehydrogenase (Complex I) which is composed of 45 different subunits.</text>
</comment>
<comment type="subcellular location">
    <subcellularLocation>
        <location evidence="1">Mitochondrion inner membrane</location>
        <topology evidence="2">Multi-pass membrane protein</topology>
    </subcellularLocation>
</comment>
<comment type="similarity">
    <text evidence="3">Belongs to the complex I subunit 4L family.</text>
</comment>